<gene>
    <name evidence="1" type="primary">cbiD</name>
    <name type="ordered locus">Pput_4709</name>
</gene>
<dbReference type="EC" id="2.1.1.195" evidence="1"/>
<dbReference type="EMBL" id="CP000712">
    <property type="protein sequence ID" value="ABQ80829.1"/>
    <property type="molecule type" value="Genomic_DNA"/>
</dbReference>
<dbReference type="SMR" id="A5W9L9"/>
<dbReference type="KEGG" id="ppf:Pput_4709"/>
<dbReference type="eggNOG" id="COG1903">
    <property type="taxonomic scope" value="Bacteria"/>
</dbReference>
<dbReference type="HOGENOM" id="CLU_041273_0_0_6"/>
<dbReference type="UniPathway" id="UPA00148">
    <property type="reaction ID" value="UER00227"/>
</dbReference>
<dbReference type="GO" id="GO:0043780">
    <property type="term" value="F:cobalt-precorrin-5B C1-methyltransferase activity"/>
    <property type="evidence" value="ECO:0007669"/>
    <property type="project" value="RHEA"/>
</dbReference>
<dbReference type="GO" id="GO:0019251">
    <property type="term" value="P:anaerobic cobalamin biosynthetic process"/>
    <property type="evidence" value="ECO:0007669"/>
    <property type="project" value="UniProtKB-UniRule"/>
</dbReference>
<dbReference type="GO" id="GO:0032259">
    <property type="term" value="P:methylation"/>
    <property type="evidence" value="ECO:0007669"/>
    <property type="project" value="UniProtKB-KW"/>
</dbReference>
<dbReference type="Gene3D" id="3.30.2110.10">
    <property type="entry name" value="CbiD-like"/>
    <property type="match status" value="1"/>
</dbReference>
<dbReference type="HAMAP" id="MF_00787">
    <property type="entry name" value="CbiD"/>
    <property type="match status" value="1"/>
</dbReference>
<dbReference type="InterPro" id="IPR002748">
    <property type="entry name" value="CbiD"/>
</dbReference>
<dbReference type="InterPro" id="IPR036074">
    <property type="entry name" value="CbiD_sf"/>
</dbReference>
<dbReference type="NCBIfam" id="TIGR00312">
    <property type="entry name" value="cbiD"/>
    <property type="match status" value="1"/>
</dbReference>
<dbReference type="NCBIfam" id="NF000849">
    <property type="entry name" value="PRK00075.1-1"/>
    <property type="match status" value="1"/>
</dbReference>
<dbReference type="PANTHER" id="PTHR35863">
    <property type="entry name" value="COBALT-PRECORRIN-5B C(1)-METHYLTRANSFERASE"/>
    <property type="match status" value="1"/>
</dbReference>
<dbReference type="PANTHER" id="PTHR35863:SF1">
    <property type="entry name" value="COBALT-PRECORRIN-5B C(1)-METHYLTRANSFERASE"/>
    <property type="match status" value="1"/>
</dbReference>
<dbReference type="Pfam" id="PF01888">
    <property type="entry name" value="CbiD"/>
    <property type="match status" value="1"/>
</dbReference>
<dbReference type="PIRSF" id="PIRSF026782">
    <property type="entry name" value="CbiD"/>
    <property type="match status" value="1"/>
</dbReference>
<dbReference type="SUPFAM" id="SSF111342">
    <property type="entry name" value="CbiD-like"/>
    <property type="match status" value="1"/>
</dbReference>
<sequence length="364" mass="37677">MREETREQPAPLRSGLTTGSCATATSLAAAKLLLTGQRDDAVDITLPKGKVVQMRLEFCRLIGECAEAGTLKDAGDDPDVTHGALLYSQVRLLAEPGIGFVAGSGVGTVTRPGLVLAVGEPAINPVPRRMISEHLQRLADACGYLGGFEVTVNVQGGEQLALKTMNPRLGILGGLSILGTSGIVRPFSCAAYIASIHQGIDVAHTNGYTHIAACTGNASEDTMRRVYGLPEIALIEMGDFVGAVLKHLRKVPVPRLTLCGGFGKISKLAAGHMDLHSRHSSIDLPQLAGWAADIGADEALQAAISGANTSQQALALAHAAGIALGDAVCAHALAFARSVVPAQVHVEVFAIDRQGGIVGQAGVQ</sequence>
<proteinExistence type="inferred from homology"/>
<organism>
    <name type="scientific">Pseudomonas putida (strain ATCC 700007 / DSM 6899 / JCM 31910 / BCRC 17059 / LMG 24140 / F1)</name>
    <dbReference type="NCBI Taxonomy" id="351746"/>
    <lineage>
        <taxon>Bacteria</taxon>
        <taxon>Pseudomonadati</taxon>
        <taxon>Pseudomonadota</taxon>
        <taxon>Gammaproteobacteria</taxon>
        <taxon>Pseudomonadales</taxon>
        <taxon>Pseudomonadaceae</taxon>
        <taxon>Pseudomonas</taxon>
    </lineage>
</organism>
<comment type="function">
    <text evidence="1">Catalyzes the methylation of C-1 in cobalt-precorrin-5B to form cobalt-precorrin-6A.</text>
</comment>
<comment type="catalytic activity">
    <reaction evidence="1">
        <text>Co-precorrin-5B + S-adenosyl-L-methionine = Co-precorrin-6A + S-adenosyl-L-homocysteine</text>
        <dbReference type="Rhea" id="RHEA:26285"/>
        <dbReference type="ChEBI" id="CHEBI:57856"/>
        <dbReference type="ChEBI" id="CHEBI:59789"/>
        <dbReference type="ChEBI" id="CHEBI:60063"/>
        <dbReference type="ChEBI" id="CHEBI:60064"/>
        <dbReference type="EC" id="2.1.1.195"/>
    </reaction>
</comment>
<comment type="pathway">
    <text evidence="1">Cofactor biosynthesis; adenosylcobalamin biosynthesis; cob(II)yrinate a,c-diamide from sirohydrochlorin (anaerobic route): step 6/10.</text>
</comment>
<comment type="similarity">
    <text evidence="1">Belongs to the CbiD family.</text>
</comment>
<reference key="1">
    <citation type="submission" date="2007-05" db="EMBL/GenBank/DDBJ databases">
        <title>Complete sequence of Pseudomonas putida F1.</title>
        <authorList>
            <consortium name="US DOE Joint Genome Institute"/>
            <person name="Copeland A."/>
            <person name="Lucas S."/>
            <person name="Lapidus A."/>
            <person name="Barry K."/>
            <person name="Detter J.C."/>
            <person name="Glavina del Rio T."/>
            <person name="Hammon N."/>
            <person name="Israni S."/>
            <person name="Dalin E."/>
            <person name="Tice H."/>
            <person name="Pitluck S."/>
            <person name="Chain P."/>
            <person name="Malfatti S."/>
            <person name="Shin M."/>
            <person name="Vergez L."/>
            <person name="Schmutz J."/>
            <person name="Larimer F."/>
            <person name="Land M."/>
            <person name="Hauser L."/>
            <person name="Kyrpides N."/>
            <person name="Lykidis A."/>
            <person name="Parales R."/>
            <person name="Richardson P."/>
        </authorList>
    </citation>
    <scope>NUCLEOTIDE SEQUENCE [LARGE SCALE GENOMIC DNA]</scope>
    <source>
        <strain>ATCC 700007 / DSM 6899 / JCM 31910 / BCRC 17059 / LMG 24140 / F1</strain>
    </source>
</reference>
<evidence type="ECO:0000255" key="1">
    <source>
        <dbReference type="HAMAP-Rule" id="MF_00787"/>
    </source>
</evidence>
<name>CBID_PSEP1</name>
<keyword id="KW-0169">Cobalamin biosynthesis</keyword>
<keyword id="KW-0489">Methyltransferase</keyword>
<keyword id="KW-0949">S-adenosyl-L-methionine</keyword>
<keyword id="KW-0808">Transferase</keyword>
<protein>
    <recommendedName>
        <fullName evidence="1">Cobalt-precorrin-5B C(1)-methyltransferase</fullName>
        <ecNumber evidence="1">2.1.1.195</ecNumber>
    </recommendedName>
    <alternativeName>
        <fullName evidence="1">Cobalt-precorrin-6A synthase</fullName>
    </alternativeName>
</protein>
<feature type="chain" id="PRO_1000046877" description="Cobalt-precorrin-5B C(1)-methyltransferase">
    <location>
        <begin position="1"/>
        <end position="364"/>
    </location>
</feature>
<accession>A5W9L9</accession>